<organism>
    <name type="scientific">Burkholderia thailandensis (strain ATCC 700388 / DSM 13276 / CCUG 48851 / CIP 106301 / E264)</name>
    <dbReference type="NCBI Taxonomy" id="271848"/>
    <lineage>
        <taxon>Bacteria</taxon>
        <taxon>Pseudomonadati</taxon>
        <taxon>Pseudomonadota</taxon>
        <taxon>Betaproteobacteria</taxon>
        <taxon>Burkholderiales</taxon>
        <taxon>Burkholderiaceae</taxon>
        <taxon>Burkholderia</taxon>
        <taxon>pseudomallei group</taxon>
    </lineage>
</organism>
<dbReference type="EC" id="2.7.4.9" evidence="1"/>
<dbReference type="EMBL" id="CP000086">
    <property type="protein sequence ID" value="ABC37302.1"/>
    <property type="molecule type" value="Genomic_DNA"/>
</dbReference>
<dbReference type="RefSeq" id="WP_009890673.1">
    <property type="nucleotide sequence ID" value="NZ_CP008785.1"/>
</dbReference>
<dbReference type="PDB" id="3V9P">
    <property type="method" value="X-ray"/>
    <property type="resolution" value="1.90 A"/>
    <property type="chains" value="A/B=1-206"/>
</dbReference>
<dbReference type="PDBsum" id="3V9P"/>
<dbReference type="SMR" id="Q2SWM4"/>
<dbReference type="GeneID" id="45121876"/>
<dbReference type="KEGG" id="bte:BTH_I2154"/>
<dbReference type="HOGENOM" id="CLU_049131_0_2_4"/>
<dbReference type="EvolutionaryTrace" id="Q2SWM4"/>
<dbReference type="Proteomes" id="UP000001930">
    <property type="component" value="Chromosome I"/>
</dbReference>
<dbReference type="GO" id="GO:0005829">
    <property type="term" value="C:cytosol"/>
    <property type="evidence" value="ECO:0007669"/>
    <property type="project" value="TreeGrafter"/>
</dbReference>
<dbReference type="GO" id="GO:0005524">
    <property type="term" value="F:ATP binding"/>
    <property type="evidence" value="ECO:0007669"/>
    <property type="project" value="UniProtKB-UniRule"/>
</dbReference>
<dbReference type="GO" id="GO:0004798">
    <property type="term" value="F:dTMP kinase activity"/>
    <property type="evidence" value="ECO:0007669"/>
    <property type="project" value="UniProtKB-UniRule"/>
</dbReference>
<dbReference type="GO" id="GO:0006233">
    <property type="term" value="P:dTDP biosynthetic process"/>
    <property type="evidence" value="ECO:0007669"/>
    <property type="project" value="InterPro"/>
</dbReference>
<dbReference type="GO" id="GO:0006235">
    <property type="term" value="P:dTTP biosynthetic process"/>
    <property type="evidence" value="ECO:0007669"/>
    <property type="project" value="UniProtKB-UniRule"/>
</dbReference>
<dbReference type="GO" id="GO:0006227">
    <property type="term" value="P:dUDP biosynthetic process"/>
    <property type="evidence" value="ECO:0007669"/>
    <property type="project" value="TreeGrafter"/>
</dbReference>
<dbReference type="CDD" id="cd01672">
    <property type="entry name" value="TMPK"/>
    <property type="match status" value="1"/>
</dbReference>
<dbReference type="FunFam" id="3.40.50.300:FF:000225">
    <property type="entry name" value="Thymidylate kinase"/>
    <property type="match status" value="1"/>
</dbReference>
<dbReference type="Gene3D" id="3.40.50.300">
    <property type="entry name" value="P-loop containing nucleotide triphosphate hydrolases"/>
    <property type="match status" value="1"/>
</dbReference>
<dbReference type="HAMAP" id="MF_00165">
    <property type="entry name" value="Thymidylate_kinase"/>
    <property type="match status" value="1"/>
</dbReference>
<dbReference type="InterPro" id="IPR027417">
    <property type="entry name" value="P-loop_NTPase"/>
</dbReference>
<dbReference type="InterPro" id="IPR039430">
    <property type="entry name" value="Thymidylate_kin-like_dom"/>
</dbReference>
<dbReference type="InterPro" id="IPR018094">
    <property type="entry name" value="Thymidylate_kinase"/>
</dbReference>
<dbReference type="NCBIfam" id="TIGR00041">
    <property type="entry name" value="DTMP_kinase"/>
    <property type="match status" value="1"/>
</dbReference>
<dbReference type="PANTHER" id="PTHR10344">
    <property type="entry name" value="THYMIDYLATE KINASE"/>
    <property type="match status" value="1"/>
</dbReference>
<dbReference type="PANTHER" id="PTHR10344:SF4">
    <property type="entry name" value="UMP-CMP KINASE 2, MITOCHONDRIAL"/>
    <property type="match status" value="1"/>
</dbReference>
<dbReference type="Pfam" id="PF02223">
    <property type="entry name" value="Thymidylate_kin"/>
    <property type="match status" value="1"/>
</dbReference>
<dbReference type="SUPFAM" id="SSF52540">
    <property type="entry name" value="P-loop containing nucleoside triphosphate hydrolases"/>
    <property type="match status" value="1"/>
</dbReference>
<protein>
    <recommendedName>
        <fullName evidence="1">Thymidylate kinase</fullName>
        <ecNumber evidence="1">2.7.4.9</ecNumber>
    </recommendedName>
    <alternativeName>
        <fullName evidence="1">dTMP kinase</fullName>
    </alternativeName>
</protein>
<accession>Q2SWM4</accession>
<comment type="function">
    <text evidence="1">Phosphorylation of dTMP to form dTDP in both de novo and salvage pathways of dTTP synthesis.</text>
</comment>
<comment type="catalytic activity">
    <reaction evidence="1">
        <text>dTMP + ATP = dTDP + ADP</text>
        <dbReference type="Rhea" id="RHEA:13517"/>
        <dbReference type="ChEBI" id="CHEBI:30616"/>
        <dbReference type="ChEBI" id="CHEBI:58369"/>
        <dbReference type="ChEBI" id="CHEBI:63528"/>
        <dbReference type="ChEBI" id="CHEBI:456216"/>
        <dbReference type="EC" id="2.7.4.9"/>
    </reaction>
</comment>
<comment type="similarity">
    <text evidence="1">Belongs to the thymidylate kinase family.</text>
</comment>
<reference key="1">
    <citation type="journal article" date="2005" name="BMC Genomics">
        <title>Bacterial genome adaptation to niches: divergence of the potential virulence genes in three Burkholderia species of different survival strategies.</title>
        <authorList>
            <person name="Kim H.S."/>
            <person name="Schell M.A."/>
            <person name="Yu Y."/>
            <person name="Ulrich R.L."/>
            <person name="Sarria S.H."/>
            <person name="Nierman W.C."/>
            <person name="DeShazer D."/>
        </authorList>
    </citation>
    <scope>NUCLEOTIDE SEQUENCE [LARGE SCALE GENOMIC DNA]</scope>
    <source>
        <strain>ATCC 700388 / DSM 13276 / CCUG 48851 / CIP 106301 / E264</strain>
    </source>
</reference>
<feature type="chain" id="PRO_1000023165" description="Thymidylate kinase">
    <location>
        <begin position="1"/>
        <end position="206"/>
    </location>
</feature>
<feature type="binding site" evidence="1">
    <location>
        <begin position="11"/>
        <end position="18"/>
    </location>
    <ligand>
        <name>ATP</name>
        <dbReference type="ChEBI" id="CHEBI:30616"/>
    </ligand>
</feature>
<feature type="strand" evidence="2">
    <location>
        <begin position="6"/>
        <end position="10"/>
    </location>
</feature>
<feature type="helix" evidence="2">
    <location>
        <begin position="18"/>
        <end position="32"/>
    </location>
</feature>
<feature type="helix" evidence="2">
    <location>
        <begin position="33"/>
        <end position="35"/>
    </location>
</feature>
<feature type="strand" evidence="2">
    <location>
        <begin position="39"/>
        <end position="48"/>
    </location>
</feature>
<feature type="helix" evidence="2">
    <location>
        <begin position="49"/>
        <end position="60"/>
    </location>
</feature>
<feature type="helix" evidence="2">
    <location>
        <begin position="65"/>
        <end position="82"/>
    </location>
</feature>
<feature type="helix" evidence="2">
    <location>
        <begin position="84"/>
        <end position="89"/>
    </location>
</feature>
<feature type="strand" evidence="2">
    <location>
        <begin position="93"/>
        <end position="97"/>
    </location>
</feature>
<feature type="helix" evidence="2">
    <location>
        <begin position="100"/>
        <end position="107"/>
    </location>
</feature>
<feature type="turn" evidence="2">
    <location>
        <begin position="108"/>
        <end position="111"/>
    </location>
</feature>
<feature type="helix" evidence="2">
    <location>
        <begin position="115"/>
        <end position="126"/>
    </location>
</feature>
<feature type="strand" evidence="2">
    <location>
        <begin position="132"/>
        <end position="138"/>
    </location>
</feature>
<feature type="helix" evidence="2">
    <location>
        <begin position="144"/>
        <end position="146"/>
    </location>
</feature>
<feature type="turn" evidence="2">
    <location>
        <begin position="147"/>
        <end position="149"/>
    </location>
</feature>
<feature type="helix" evidence="2">
    <location>
        <begin position="160"/>
        <end position="178"/>
    </location>
</feature>
<feature type="turn" evidence="2">
    <location>
        <begin position="180"/>
        <end position="182"/>
    </location>
</feature>
<feature type="strand" evidence="2">
    <location>
        <begin position="183"/>
        <end position="187"/>
    </location>
</feature>
<feature type="helix" evidence="2">
    <location>
        <begin position="192"/>
        <end position="205"/>
    </location>
</feature>
<name>KTHY_BURTA</name>
<proteinExistence type="evidence at protein level"/>
<gene>
    <name evidence="1" type="primary">tmk</name>
    <name type="ordered locus">BTH_I2154</name>
</gene>
<evidence type="ECO:0000255" key="1">
    <source>
        <dbReference type="HAMAP-Rule" id="MF_00165"/>
    </source>
</evidence>
<evidence type="ECO:0007829" key="2">
    <source>
        <dbReference type="PDB" id="3V9P"/>
    </source>
</evidence>
<sequence length="206" mass="23084">MARGKFITFEGIDGAGKTTHLQWFCDRLQERLGPAGRHVVVTREPGGTRLGETLREILLNQPMDLETEALLMFAGRREHLALVIEPALARGDWVVSDRFTDATFAYQGGGRGLPRDKLEALERWVQGGFQPDLTVLFDVPPQIASARRGAVRMPDKFESESDAFFARTRAEYLRRAQEAPHRFVIVDSSEPIAQIRKQLEGVLAAL</sequence>
<keyword id="KW-0002">3D-structure</keyword>
<keyword id="KW-0067">ATP-binding</keyword>
<keyword id="KW-0418">Kinase</keyword>
<keyword id="KW-0545">Nucleotide biosynthesis</keyword>
<keyword id="KW-0547">Nucleotide-binding</keyword>
<keyword id="KW-0808">Transferase</keyword>